<name>SYE_ALIF1</name>
<accession>Q5E3L4</accession>
<evidence type="ECO:0000255" key="1">
    <source>
        <dbReference type="HAMAP-Rule" id="MF_00022"/>
    </source>
</evidence>
<keyword id="KW-0030">Aminoacyl-tRNA synthetase</keyword>
<keyword id="KW-0067">ATP-binding</keyword>
<keyword id="KW-0963">Cytoplasm</keyword>
<keyword id="KW-0436">Ligase</keyword>
<keyword id="KW-0547">Nucleotide-binding</keyword>
<keyword id="KW-0648">Protein biosynthesis</keyword>
<keyword id="KW-1185">Reference proteome</keyword>
<dbReference type="EC" id="6.1.1.17" evidence="1"/>
<dbReference type="EMBL" id="CP000020">
    <property type="protein sequence ID" value="AAW86382.1"/>
    <property type="molecule type" value="Genomic_DNA"/>
</dbReference>
<dbReference type="RefSeq" id="WP_011262380.1">
    <property type="nucleotide sequence ID" value="NC_006840.2"/>
</dbReference>
<dbReference type="RefSeq" id="YP_205270.1">
    <property type="nucleotide sequence ID" value="NC_006840.2"/>
</dbReference>
<dbReference type="SMR" id="Q5E3L4"/>
<dbReference type="STRING" id="312309.VF_1887"/>
<dbReference type="EnsemblBacteria" id="AAW86382">
    <property type="protein sequence ID" value="AAW86382"/>
    <property type="gene ID" value="VF_1887"/>
</dbReference>
<dbReference type="GeneID" id="54164585"/>
<dbReference type="KEGG" id="vfi:VF_1887"/>
<dbReference type="PATRIC" id="fig|312309.11.peg.1915"/>
<dbReference type="eggNOG" id="COG0008">
    <property type="taxonomic scope" value="Bacteria"/>
</dbReference>
<dbReference type="HOGENOM" id="CLU_015768_6_0_6"/>
<dbReference type="OrthoDB" id="9807503at2"/>
<dbReference type="Proteomes" id="UP000000537">
    <property type="component" value="Chromosome I"/>
</dbReference>
<dbReference type="GO" id="GO:0005829">
    <property type="term" value="C:cytosol"/>
    <property type="evidence" value="ECO:0007669"/>
    <property type="project" value="TreeGrafter"/>
</dbReference>
<dbReference type="GO" id="GO:0005524">
    <property type="term" value="F:ATP binding"/>
    <property type="evidence" value="ECO:0007669"/>
    <property type="project" value="UniProtKB-UniRule"/>
</dbReference>
<dbReference type="GO" id="GO:0004818">
    <property type="term" value="F:glutamate-tRNA ligase activity"/>
    <property type="evidence" value="ECO:0007669"/>
    <property type="project" value="UniProtKB-UniRule"/>
</dbReference>
<dbReference type="GO" id="GO:0000049">
    <property type="term" value="F:tRNA binding"/>
    <property type="evidence" value="ECO:0007669"/>
    <property type="project" value="InterPro"/>
</dbReference>
<dbReference type="GO" id="GO:0008270">
    <property type="term" value="F:zinc ion binding"/>
    <property type="evidence" value="ECO:0007669"/>
    <property type="project" value="InterPro"/>
</dbReference>
<dbReference type="GO" id="GO:0006424">
    <property type="term" value="P:glutamyl-tRNA aminoacylation"/>
    <property type="evidence" value="ECO:0007669"/>
    <property type="project" value="UniProtKB-UniRule"/>
</dbReference>
<dbReference type="CDD" id="cd00808">
    <property type="entry name" value="GluRS_core"/>
    <property type="match status" value="1"/>
</dbReference>
<dbReference type="FunFam" id="3.40.50.620:FF:000007">
    <property type="entry name" value="Glutamate--tRNA ligase"/>
    <property type="match status" value="1"/>
</dbReference>
<dbReference type="Gene3D" id="1.10.10.350">
    <property type="match status" value="1"/>
</dbReference>
<dbReference type="Gene3D" id="3.40.50.620">
    <property type="entry name" value="HUPs"/>
    <property type="match status" value="1"/>
</dbReference>
<dbReference type="HAMAP" id="MF_00022">
    <property type="entry name" value="Glu_tRNA_synth_type1"/>
    <property type="match status" value="1"/>
</dbReference>
<dbReference type="InterPro" id="IPR045462">
    <property type="entry name" value="aa-tRNA-synth_I_cd-bd"/>
</dbReference>
<dbReference type="InterPro" id="IPR020751">
    <property type="entry name" value="aa-tRNA-synth_I_codon-bd_sub2"/>
</dbReference>
<dbReference type="InterPro" id="IPR001412">
    <property type="entry name" value="aa-tRNA-synth_I_CS"/>
</dbReference>
<dbReference type="InterPro" id="IPR008925">
    <property type="entry name" value="aa_tRNA-synth_I_cd-bd_sf"/>
</dbReference>
<dbReference type="InterPro" id="IPR004527">
    <property type="entry name" value="Glu-tRNA-ligase_bac/mito"/>
</dbReference>
<dbReference type="InterPro" id="IPR000924">
    <property type="entry name" value="Glu/Gln-tRNA-synth"/>
</dbReference>
<dbReference type="InterPro" id="IPR020058">
    <property type="entry name" value="Glu/Gln-tRNA-synth_Ib_cat-dom"/>
</dbReference>
<dbReference type="InterPro" id="IPR049940">
    <property type="entry name" value="GluQ/Sye"/>
</dbReference>
<dbReference type="InterPro" id="IPR033910">
    <property type="entry name" value="GluRS_core"/>
</dbReference>
<dbReference type="InterPro" id="IPR014729">
    <property type="entry name" value="Rossmann-like_a/b/a_fold"/>
</dbReference>
<dbReference type="NCBIfam" id="TIGR00464">
    <property type="entry name" value="gltX_bact"/>
    <property type="match status" value="1"/>
</dbReference>
<dbReference type="PANTHER" id="PTHR43311">
    <property type="entry name" value="GLUTAMATE--TRNA LIGASE"/>
    <property type="match status" value="1"/>
</dbReference>
<dbReference type="PANTHER" id="PTHR43311:SF2">
    <property type="entry name" value="GLUTAMATE--TRNA LIGASE, MITOCHONDRIAL-RELATED"/>
    <property type="match status" value="1"/>
</dbReference>
<dbReference type="Pfam" id="PF19269">
    <property type="entry name" value="Anticodon_2"/>
    <property type="match status" value="1"/>
</dbReference>
<dbReference type="Pfam" id="PF00749">
    <property type="entry name" value="tRNA-synt_1c"/>
    <property type="match status" value="1"/>
</dbReference>
<dbReference type="PRINTS" id="PR00987">
    <property type="entry name" value="TRNASYNTHGLU"/>
</dbReference>
<dbReference type="SUPFAM" id="SSF48163">
    <property type="entry name" value="An anticodon-binding domain of class I aminoacyl-tRNA synthetases"/>
    <property type="match status" value="1"/>
</dbReference>
<dbReference type="SUPFAM" id="SSF52374">
    <property type="entry name" value="Nucleotidylyl transferase"/>
    <property type="match status" value="1"/>
</dbReference>
<dbReference type="PROSITE" id="PS00178">
    <property type="entry name" value="AA_TRNA_LIGASE_I"/>
    <property type="match status" value="1"/>
</dbReference>
<feature type="chain" id="PRO_0000119692" description="Glutamate--tRNA ligase">
    <location>
        <begin position="1"/>
        <end position="474"/>
    </location>
</feature>
<feature type="short sequence motif" description="'HIGH' region" evidence="1">
    <location>
        <begin position="9"/>
        <end position="19"/>
    </location>
</feature>
<feature type="short sequence motif" description="'KMSKS' region" evidence="1">
    <location>
        <begin position="240"/>
        <end position="244"/>
    </location>
</feature>
<feature type="binding site" evidence="1">
    <location>
        <position position="243"/>
    </location>
    <ligand>
        <name>ATP</name>
        <dbReference type="ChEBI" id="CHEBI:30616"/>
    </ligand>
</feature>
<proteinExistence type="inferred from homology"/>
<comment type="function">
    <text evidence="1">Catalyzes the attachment of glutamate to tRNA(Glu) in a two-step reaction: glutamate is first activated by ATP to form Glu-AMP and then transferred to the acceptor end of tRNA(Glu).</text>
</comment>
<comment type="catalytic activity">
    <reaction evidence="1">
        <text>tRNA(Glu) + L-glutamate + ATP = L-glutamyl-tRNA(Glu) + AMP + diphosphate</text>
        <dbReference type="Rhea" id="RHEA:23540"/>
        <dbReference type="Rhea" id="RHEA-COMP:9663"/>
        <dbReference type="Rhea" id="RHEA-COMP:9680"/>
        <dbReference type="ChEBI" id="CHEBI:29985"/>
        <dbReference type="ChEBI" id="CHEBI:30616"/>
        <dbReference type="ChEBI" id="CHEBI:33019"/>
        <dbReference type="ChEBI" id="CHEBI:78442"/>
        <dbReference type="ChEBI" id="CHEBI:78520"/>
        <dbReference type="ChEBI" id="CHEBI:456215"/>
        <dbReference type="EC" id="6.1.1.17"/>
    </reaction>
</comment>
<comment type="subunit">
    <text evidence="1">Monomer.</text>
</comment>
<comment type="subcellular location">
    <subcellularLocation>
        <location evidence="1">Cytoplasm</location>
    </subcellularLocation>
</comment>
<comment type="similarity">
    <text evidence="1">Belongs to the class-I aminoacyl-tRNA synthetase family. Glutamate--tRNA ligase type 1 subfamily.</text>
</comment>
<reference key="1">
    <citation type="journal article" date="2005" name="Proc. Natl. Acad. Sci. U.S.A.">
        <title>Complete genome sequence of Vibrio fischeri: a symbiotic bacterium with pathogenic congeners.</title>
        <authorList>
            <person name="Ruby E.G."/>
            <person name="Urbanowski M."/>
            <person name="Campbell J."/>
            <person name="Dunn A."/>
            <person name="Faini M."/>
            <person name="Gunsalus R."/>
            <person name="Lostroh P."/>
            <person name="Lupp C."/>
            <person name="McCann J."/>
            <person name="Millikan D."/>
            <person name="Schaefer A."/>
            <person name="Stabb E."/>
            <person name="Stevens A."/>
            <person name="Visick K."/>
            <person name="Whistler C."/>
            <person name="Greenberg E.P."/>
        </authorList>
    </citation>
    <scope>NUCLEOTIDE SEQUENCE [LARGE SCALE GENOMIC DNA]</scope>
    <source>
        <strain>ATCC 700601 / ES114</strain>
    </source>
</reference>
<sequence length="474" mass="53249">MTVKTRFAPSPTGYLHVGGARTALYSWLFAKNQGGEFVLRIEDTDLERNSQEAVDAIIEGMHWMGMEWDEGPYYQSKRFDRYNEVVDQLLAEDKAYKCYASKELLDEIRAEQEANKEMARYDANHPKIVAANAAAKEGDACVIRFRNPKEGSVVFDDQIRGRIEISNSQLDDLIIRRTDGAPTYNFVVVVDDWDMGITQVIRGEDHINNTPRQINIYEALGAPVPMFAHCAMILGDDGAKLSKRHGAVSVMQYRDEGYLPNALNNYLVRLGWSHGDQEIFSQEEMINLFSLSAVSKSASAFNTDKLLWLNNHYIKSSEPEYVAKYLQWHLDQKEISLDNGPAITEVIKLVGERCNTLIELADQSRYFYQDFEEFEAGAAKKHLRGVAKGPLELALAKVEALEEWTTENLHNVIEEVCAELEIGMGKIGMPLRVAVTGGGQSPSVDAVMQLVGKERVVARIKMALAFIAEREANA</sequence>
<protein>
    <recommendedName>
        <fullName evidence="1">Glutamate--tRNA ligase</fullName>
        <ecNumber evidence="1">6.1.1.17</ecNumber>
    </recommendedName>
    <alternativeName>
        <fullName evidence="1">Glutamyl-tRNA synthetase</fullName>
        <shortName evidence="1">GluRS</shortName>
    </alternativeName>
</protein>
<organism>
    <name type="scientific">Aliivibrio fischeri (strain ATCC 700601 / ES114)</name>
    <name type="common">Vibrio fischeri</name>
    <dbReference type="NCBI Taxonomy" id="312309"/>
    <lineage>
        <taxon>Bacteria</taxon>
        <taxon>Pseudomonadati</taxon>
        <taxon>Pseudomonadota</taxon>
        <taxon>Gammaproteobacteria</taxon>
        <taxon>Vibrionales</taxon>
        <taxon>Vibrionaceae</taxon>
        <taxon>Aliivibrio</taxon>
    </lineage>
</organism>
<gene>
    <name evidence="1" type="primary">gltX</name>
    <name type="ordered locus">VF_1887</name>
</gene>